<gene>
    <name evidence="1" type="primary">fadB</name>
    <name type="ordered locus">EcE24377A_4365</name>
</gene>
<dbReference type="EC" id="4.2.1.17" evidence="1"/>
<dbReference type="EC" id="5.1.2.3" evidence="1"/>
<dbReference type="EC" id="5.3.3.8" evidence="1"/>
<dbReference type="EC" id="1.1.1.35" evidence="1"/>
<dbReference type="EMBL" id="CP000800">
    <property type="protein sequence ID" value="ABV20128.1"/>
    <property type="molecule type" value="Genomic_DNA"/>
</dbReference>
<dbReference type="RefSeq" id="WP_000965980.1">
    <property type="nucleotide sequence ID" value="NC_009801.1"/>
</dbReference>
<dbReference type="SMR" id="A7ZU51"/>
<dbReference type="GeneID" id="75204838"/>
<dbReference type="KEGG" id="ecw:EcE24377A_4365"/>
<dbReference type="HOGENOM" id="CLU_009834_16_3_6"/>
<dbReference type="UniPathway" id="UPA00659"/>
<dbReference type="Proteomes" id="UP000001122">
    <property type="component" value="Chromosome"/>
</dbReference>
<dbReference type="GO" id="GO:0036125">
    <property type="term" value="C:fatty acid beta-oxidation multienzyme complex"/>
    <property type="evidence" value="ECO:0007669"/>
    <property type="project" value="InterPro"/>
</dbReference>
<dbReference type="GO" id="GO:0008692">
    <property type="term" value="F:3-hydroxybutyryl-CoA epimerase activity"/>
    <property type="evidence" value="ECO:0007669"/>
    <property type="project" value="UniProtKB-UniRule"/>
</dbReference>
<dbReference type="GO" id="GO:0004165">
    <property type="term" value="F:delta(3)-delta(2)-enoyl-CoA isomerase activity"/>
    <property type="evidence" value="ECO:0007669"/>
    <property type="project" value="UniProtKB-UniRule"/>
</dbReference>
<dbReference type="GO" id="GO:0004300">
    <property type="term" value="F:enoyl-CoA hydratase activity"/>
    <property type="evidence" value="ECO:0007669"/>
    <property type="project" value="UniProtKB-UniRule"/>
</dbReference>
<dbReference type="GO" id="GO:0016509">
    <property type="term" value="F:long-chain-3-hydroxyacyl-CoA dehydrogenase activity"/>
    <property type="evidence" value="ECO:0007669"/>
    <property type="project" value="TreeGrafter"/>
</dbReference>
<dbReference type="GO" id="GO:0070403">
    <property type="term" value="F:NAD+ binding"/>
    <property type="evidence" value="ECO:0007669"/>
    <property type="project" value="InterPro"/>
</dbReference>
<dbReference type="GO" id="GO:0006635">
    <property type="term" value="P:fatty acid beta-oxidation"/>
    <property type="evidence" value="ECO:0007669"/>
    <property type="project" value="UniProtKB-UniRule"/>
</dbReference>
<dbReference type="CDD" id="cd06558">
    <property type="entry name" value="crotonase-like"/>
    <property type="match status" value="1"/>
</dbReference>
<dbReference type="FunFam" id="1.10.1040.50:FF:000001">
    <property type="entry name" value="Fatty acid oxidation complex subunit alpha"/>
    <property type="match status" value="1"/>
</dbReference>
<dbReference type="FunFam" id="3.90.226.10:FF:000018">
    <property type="entry name" value="Fatty acid oxidation complex subunit alpha"/>
    <property type="match status" value="1"/>
</dbReference>
<dbReference type="FunFam" id="3.40.50.720:FF:000009">
    <property type="entry name" value="Fatty oxidation complex, alpha subunit"/>
    <property type="match status" value="1"/>
</dbReference>
<dbReference type="Gene3D" id="1.10.1040.50">
    <property type="match status" value="1"/>
</dbReference>
<dbReference type="Gene3D" id="3.90.226.10">
    <property type="entry name" value="2-enoyl-CoA Hydratase, Chain A, domain 1"/>
    <property type="match status" value="1"/>
</dbReference>
<dbReference type="Gene3D" id="3.40.50.720">
    <property type="entry name" value="NAD(P)-binding Rossmann-like Domain"/>
    <property type="match status" value="1"/>
</dbReference>
<dbReference type="HAMAP" id="MF_01621">
    <property type="entry name" value="FadB"/>
    <property type="match status" value="1"/>
</dbReference>
<dbReference type="InterPro" id="IPR006180">
    <property type="entry name" value="3-OHacyl-CoA_DH_CS"/>
</dbReference>
<dbReference type="InterPro" id="IPR006176">
    <property type="entry name" value="3-OHacyl-CoA_DH_NAD-bd"/>
</dbReference>
<dbReference type="InterPro" id="IPR006108">
    <property type="entry name" value="3HC_DH_C"/>
</dbReference>
<dbReference type="InterPro" id="IPR008927">
    <property type="entry name" value="6-PGluconate_DH-like_C_sf"/>
</dbReference>
<dbReference type="InterPro" id="IPR029045">
    <property type="entry name" value="ClpP/crotonase-like_dom_sf"/>
</dbReference>
<dbReference type="InterPro" id="IPR018376">
    <property type="entry name" value="Enoyl-CoA_hyd/isom_CS"/>
</dbReference>
<dbReference type="InterPro" id="IPR001753">
    <property type="entry name" value="Enoyl-CoA_hydra/iso"/>
</dbReference>
<dbReference type="InterPro" id="IPR050136">
    <property type="entry name" value="FA_oxidation_alpha_subunit"/>
</dbReference>
<dbReference type="InterPro" id="IPR012799">
    <property type="entry name" value="FadB"/>
</dbReference>
<dbReference type="InterPro" id="IPR036291">
    <property type="entry name" value="NAD(P)-bd_dom_sf"/>
</dbReference>
<dbReference type="NCBIfam" id="TIGR02437">
    <property type="entry name" value="FadB"/>
    <property type="match status" value="1"/>
</dbReference>
<dbReference type="NCBIfam" id="NF008727">
    <property type="entry name" value="PRK11730.1"/>
    <property type="match status" value="1"/>
</dbReference>
<dbReference type="PANTHER" id="PTHR43612">
    <property type="entry name" value="TRIFUNCTIONAL ENZYME SUBUNIT ALPHA"/>
    <property type="match status" value="1"/>
</dbReference>
<dbReference type="PANTHER" id="PTHR43612:SF3">
    <property type="entry name" value="TRIFUNCTIONAL ENZYME SUBUNIT ALPHA, MITOCHONDRIAL"/>
    <property type="match status" value="1"/>
</dbReference>
<dbReference type="Pfam" id="PF00725">
    <property type="entry name" value="3HCDH"/>
    <property type="match status" value="2"/>
</dbReference>
<dbReference type="Pfam" id="PF02737">
    <property type="entry name" value="3HCDH_N"/>
    <property type="match status" value="1"/>
</dbReference>
<dbReference type="Pfam" id="PF00378">
    <property type="entry name" value="ECH_1"/>
    <property type="match status" value="1"/>
</dbReference>
<dbReference type="SUPFAM" id="SSF48179">
    <property type="entry name" value="6-phosphogluconate dehydrogenase C-terminal domain-like"/>
    <property type="match status" value="2"/>
</dbReference>
<dbReference type="SUPFAM" id="SSF52096">
    <property type="entry name" value="ClpP/crotonase"/>
    <property type="match status" value="1"/>
</dbReference>
<dbReference type="SUPFAM" id="SSF51735">
    <property type="entry name" value="NAD(P)-binding Rossmann-fold domains"/>
    <property type="match status" value="1"/>
</dbReference>
<dbReference type="PROSITE" id="PS00067">
    <property type="entry name" value="3HCDH"/>
    <property type="match status" value="1"/>
</dbReference>
<dbReference type="PROSITE" id="PS00166">
    <property type="entry name" value="ENOYL_COA_HYDRATASE"/>
    <property type="match status" value="1"/>
</dbReference>
<name>FADB_ECO24</name>
<keyword id="KW-0276">Fatty acid metabolism</keyword>
<keyword id="KW-0413">Isomerase</keyword>
<keyword id="KW-0442">Lipid degradation</keyword>
<keyword id="KW-0443">Lipid metabolism</keyword>
<keyword id="KW-0456">Lyase</keyword>
<keyword id="KW-0511">Multifunctional enzyme</keyword>
<keyword id="KW-0520">NAD</keyword>
<keyword id="KW-0560">Oxidoreductase</keyword>
<keyword id="KW-1185">Reference proteome</keyword>
<evidence type="ECO:0000255" key="1">
    <source>
        <dbReference type="HAMAP-Rule" id="MF_01621"/>
    </source>
</evidence>
<evidence type="ECO:0000256" key="2">
    <source>
        <dbReference type="SAM" id="MobiDB-lite"/>
    </source>
</evidence>
<organism>
    <name type="scientific">Escherichia coli O139:H28 (strain E24377A / ETEC)</name>
    <dbReference type="NCBI Taxonomy" id="331111"/>
    <lineage>
        <taxon>Bacteria</taxon>
        <taxon>Pseudomonadati</taxon>
        <taxon>Pseudomonadota</taxon>
        <taxon>Gammaproteobacteria</taxon>
        <taxon>Enterobacterales</taxon>
        <taxon>Enterobacteriaceae</taxon>
        <taxon>Escherichia</taxon>
    </lineage>
</organism>
<protein>
    <recommendedName>
        <fullName evidence="1">Fatty acid oxidation complex subunit alpha</fullName>
    </recommendedName>
    <domain>
        <recommendedName>
            <fullName evidence="1">Enoyl-CoA hydratase/Delta(3)-cis-Delta(2)-trans-enoyl-CoA isomerase/3-hydroxybutyryl-CoA epimerase</fullName>
            <ecNumber evidence="1">4.2.1.17</ecNumber>
            <ecNumber evidence="1">5.1.2.3</ecNumber>
            <ecNumber evidence="1">5.3.3.8</ecNumber>
        </recommendedName>
    </domain>
    <domain>
        <recommendedName>
            <fullName evidence="1">3-hydroxyacyl-CoA dehydrogenase</fullName>
            <ecNumber evidence="1">1.1.1.35</ecNumber>
        </recommendedName>
    </domain>
</protein>
<comment type="function">
    <text evidence="1">Involved in the aerobic and anaerobic degradation of long-chain fatty acids via beta-oxidation cycle. Catalyzes the formation of 3-oxoacyl-CoA from enoyl-CoA via L-3-hydroxyacyl-CoA. It can also use D-3-hydroxyacyl-CoA and cis-3-enoyl-CoA as substrate.</text>
</comment>
<comment type="catalytic activity">
    <reaction evidence="1">
        <text>a (3S)-3-hydroxyacyl-CoA + NAD(+) = a 3-oxoacyl-CoA + NADH + H(+)</text>
        <dbReference type="Rhea" id="RHEA:22432"/>
        <dbReference type="ChEBI" id="CHEBI:15378"/>
        <dbReference type="ChEBI" id="CHEBI:57318"/>
        <dbReference type="ChEBI" id="CHEBI:57540"/>
        <dbReference type="ChEBI" id="CHEBI:57945"/>
        <dbReference type="ChEBI" id="CHEBI:90726"/>
        <dbReference type="EC" id="1.1.1.35"/>
    </reaction>
</comment>
<comment type="catalytic activity">
    <reaction evidence="1">
        <text>a (3S)-3-hydroxyacyl-CoA = a (2E)-enoyl-CoA + H2O</text>
        <dbReference type="Rhea" id="RHEA:16105"/>
        <dbReference type="ChEBI" id="CHEBI:15377"/>
        <dbReference type="ChEBI" id="CHEBI:57318"/>
        <dbReference type="ChEBI" id="CHEBI:58856"/>
        <dbReference type="EC" id="4.2.1.17"/>
    </reaction>
</comment>
<comment type="catalytic activity">
    <reaction evidence="1">
        <text>a 4-saturated-(3S)-3-hydroxyacyl-CoA = a (3E)-enoyl-CoA + H2O</text>
        <dbReference type="Rhea" id="RHEA:20724"/>
        <dbReference type="ChEBI" id="CHEBI:15377"/>
        <dbReference type="ChEBI" id="CHEBI:58521"/>
        <dbReference type="ChEBI" id="CHEBI:137480"/>
        <dbReference type="EC" id="4.2.1.17"/>
    </reaction>
</comment>
<comment type="catalytic activity">
    <reaction evidence="1">
        <text>(3S)-3-hydroxybutanoyl-CoA = (3R)-3-hydroxybutanoyl-CoA</text>
        <dbReference type="Rhea" id="RHEA:21760"/>
        <dbReference type="ChEBI" id="CHEBI:57315"/>
        <dbReference type="ChEBI" id="CHEBI:57316"/>
        <dbReference type="EC" id="5.1.2.3"/>
    </reaction>
</comment>
<comment type="catalytic activity">
    <reaction evidence="1">
        <text>a (3Z)-enoyl-CoA = a 4-saturated (2E)-enoyl-CoA</text>
        <dbReference type="Rhea" id="RHEA:45900"/>
        <dbReference type="ChEBI" id="CHEBI:85097"/>
        <dbReference type="ChEBI" id="CHEBI:85489"/>
        <dbReference type="EC" id="5.3.3.8"/>
    </reaction>
</comment>
<comment type="catalytic activity">
    <reaction evidence="1">
        <text>a (3E)-enoyl-CoA = a 4-saturated (2E)-enoyl-CoA</text>
        <dbReference type="Rhea" id="RHEA:45228"/>
        <dbReference type="ChEBI" id="CHEBI:58521"/>
        <dbReference type="ChEBI" id="CHEBI:85097"/>
        <dbReference type="EC" id="5.3.3.8"/>
    </reaction>
</comment>
<comment type="pathway">
    <text evidence="1">Lipid metabolism; fatty acid beta-oxidation.</text>
</comment>
<comment type="subunit">
    <text evidence="1">Heterotetramer of two alpha chains (FadB) and two beta chains (FadA).</text>
</comment>
<comment type="similarity">
    <text evidence="1">In the N-terminal section; belongs to the enoyl-CoA hydratase/isomerase family.</text>
</comment>
<comment type="similarity">
    <text evidence="1">In the C-terminal section; belongs to the 3-hydroxyacyl-CoA dehydrogenase family.</text>
</comment>
<feature type="chain" id="PRO_1000069560" description="Fatty acid oxidation complex subunit alpha">
    <location>
        <begin position="1"/>
        <end position="729"/>
    </location>
</feature>
<feature type="region of interest" description="Enoyl-CoA hydratase/isomerase" evidence="1">
    <location>
        <begin position="1"/>
        <end position="189"/>
    </location>
</feature>
<feature type="region of interest" description="3-hydroxyacyl-CoA dehydrogenase" evidence="1">
    <location>
        <begin position="311"/>
        <end position="729"/>
    </location>
</feature>
<feature type="region of interest" description="Disordered" evidence="2">
    <location>
        <begin position="708"/>
        <end position="729"/>
    </location>
</feature>
<feature type="active site" description="For 3-hydroxyacyl-CoA dehydrogenase activity" evidence="1">
    <location>
        <position position="450"/>
    </location>
</feature>
<feature type="binding site" evidence="1">
    <location>
        <position position="296"/>
    </location>
    <ligand>
        <name>substrate</name>
    </ligand>
</feature>
<feature type="binding site" evidence="1">
    <location>
        <position position="324"/>
    </location>
    <ligand>
        <name>NAD(+)</name>
        <dbReference type="ChEBI" id="CHEBI:57540"/>
    </ligand>
</feature>
<feature type="binding site" evidence="1">
    <location>
        <position position="343"/>
    </location>
    <ligand>
        <name>NAD(+)</name>
        <dbReference type="ChEBI" id="CHEBI:57540"/>
    </ligand>
</feature>
<feature type="binding site" evidence="1">
    <location>
        <begin position="400"/>
        <end position="402"/>
    </location>
    <ligand>
        <name>NAD(+)</name>
        <dbReference type="ChEBI" id="CHEBI:57540"/>
    </ligand>
</feature>
<feature type="binding site" evidence="1">
    <location>
        <position position="407"/>
    </location>
    <ligand>
        <name>NAD(+)</name>
        <dbReference type="ChEBI" id="CHEBI:57540"/>
    </ligand>
</feature>
<feature type="binding site" evidence="1">
    <location>
        <position position="429"/>
    </location>
    <ligand>
        <name>NAD(+)</name>
        <dbReference type="ChEBI" id="CHEBI:57540"/>
    </ligand>
</feature>
<feature type="binding site" evidence="1">
    <location>
        <position position="453"/>
    </location>
    <ligand>
        <name>NAD(+)</name>
        <dbReference type="ChEBI" id="CHEBI:57540"/>
    </ligand>
</feature>
<feature type="binding site" evidence="1">
    <location>
        <position position="500"/>
    </location>
    <ligand>
        <name>substrate</name>
    </ligand>
</feature>
<feature type="binding site" evidence="1">
    <location>
        <position position="660"/>
    </location>
    <ligand>
        <name>substrate</name>
    </ligand>
</feature>
<feature type="site" description="Important for catalytic activity" evidence="1">
    <location>
        <position position="119"/>
    </location>
</feature>
<feature type="site" description="Important for catalytic activity" evidence="1">
    <location>
        <position position="139"/>
    </location>
</feature>
<proteinExistence type="inferred from homology"/>
<reference key="1">
    <citation type="journal article" date="2008" name="J. Bacteriol.">
        <title>The pangenome structure of Escherichia coli: comparative genomic analysis of E. coli commensal and pathogenic isolates.</title>
        <authorList>
            <person name="Rasko D.A."/>
            <person name="Rosovitz M.J."/>
            <person name="Myers G.S.A."/>
            <person name="Mongodin E.F."/>
            <person name="Fricke W.F."/>
            <person name="Gajer P."/>
            <person name="Crabtree J."/>
            <person name="Sebaihia M."/>
            <person name="Thomson N.R."/>
            <person name="Chaudhuri R."/>
            <person name="Henderson I.R."/>
            <person name="Sperandio V."/>
            <person name="Ravel J."/>
        </authorList>
    </citation>
    <scope>NUCLEOTIDE SEQUENCE [LARGE SCALE GENOMIC DNA]</scope>
    <source>
        <strain>E24377A / ETEC</strain>
    </source>
</reference>
<sequence length="729" mass="79598">MLYKGDTLYLDWLEDGIAELVFDAPGSVNKLDTATVASLGEAIGVLEQQSDLKGLLLRSNKAAFIVGADITEFLSLFLVPEEQLSQWLQFANSVFNRLEDLPVPTIAAVNGYALGGGCECVLATDYRLATPDLRIGLPETKLGIMPGFGGSVRMPRMLGADSALEIIAAGKDVGADQALKIGLVDGVVKAEKLVEGAKAVLRQAINGDLDWKAKRQPKLEPLKLSKIEATMSFTIAKGMVAQTAGKHYPAPITAVKTIEAAARFGREEALNLENKSFVPLAHTNEARALVGIFLNDQYVKGKAKKLTKDVETPKQAAVLGAGIMGGGIAYQSAWKGVPVVMKDINDKSLTLGMTEAAKLLNKQLERGKIDGLKLAGVISTIHPTLDYAGFDRVDVVVEAVVENPKVKKAVLAETEQKVRPDTVLASNTSTIPISELANALERPENFCGMHFFNPVHRMPLVEIIRGEKSSDETIAKVVAWASKMGKTPIVVNDCPGFFVNRVLFPYFAGFSQLLRDGADFRKIDKVMEKQFGWPMGPAYLLDVVGIDTAHHAQAVMAAGFPQRMQKDYRDAIDALFDANRFGQKNGLGFWRYKEDSKGKPKKEEDAVVDDLLAEVSQPKRDFSEEEIIARMMIPMVNEVVRCLEESIIATPAEADMALIYGLGFPPFHGGAFRWLDTLGSAKYLDMAQQYQHLGPLYEVPEGLRNKARHNEPYYPPVEPARPVGDLKTA</sequence>
<accession>A7ZU51</accession>